<feature type="chain" id="PRO_1000021310" description="Shikimate dehydrogenase (NADP(+))">
    <location>
        <begin position="1"/>
        <end position="264"/>
    </location>
</feature>
<feature type="active site" description="Proton acceptor" evidence="1">
    <location>
        <position position="65"/>
    </location>
</feature>
<feature type="binding site" evidence="1">
    <location>
        <begin position="14"/>
        <end position="16"/>
    </location>
    <ligand>
        <name>shikimate</name>
        <dbReference type="ChEBI" id="CHEBI:36208"/>
    </ligand>
</feature>
<feature type="binding site" evidence="1">
    <location>
        <position position="61"/>
    </location>
    <ligand>
        <name>shikimate</name>
        <dbReference type="ChEBI" id="CHEBI:36208"/>
    </ligand>
</feature>
<feature type="binding site" evidence="1">
    <location>
        <position position="85"/>
    </location>
    <ligand>
        <name>shikimate</name>
        <dbReference type="ChEBI" id="CHEBI:36208"/>
    </ligand>
</feature>
<feature type="binding site" evidence="1">
    <location>
        <position position="99"/>
    </location>
    <ligand>
        <name>shikimate</name>
        <dbReference type="ChEBI" id="CHEBI:36208"/>
    </ligand>
</feature>
<feature type="binding site" evidence="1">
    <location>
        <begin position="122"/>
        <end position="126"/>
    </location>
    <ligand>
        <name>NADP(+)</name>
        <dbReference type="ChEBI" id="CHEBI:58349"/>
    </ligand>
</feature>
<feature type="binding site" evidence="1">
    <location>
        <begin position="145"/>
        <end position="150"/>
    </location>
    <ligand>
        <name>NADP(+)</name>
        <dbReference type="ChEBI" id="CHEBI:58349"/>
    </ligand>
</feature>
<feature type="binding site" evidence="1">
    <location>
        <position position="208"/>
    </location>
    <ligand>
        <name>NADP(+)</name>
        <dbReference type="ChEBI" id="CHEBI:58349"/>
    </ligand>
</feature>
<feature type="binding site" evidence="1">
    <location>
        <position position="210"/>
    </location>
    <ligand>
        <name>shikimate</name>
        <dbReference type="ChEBI" id="CHEBI:36208"/>
    </ligand>
</feature>
<feature type="binding site" evidence="1">
    <location>
        <position position="231"/>
    </location>
    <ligand>
        <name>NADP(+)</name>
        <dbReference type="ChEBI" id="CHEBI:58349"/>
    </ligand>
</feature>
<organism>
    <name type="scientific">Natronomonas pharaonis (strain ATCC 35678 / DSM 2160 / CIP 103997 / JCM 8858 / NBRC 14720 / NCIMB 2260 / Gabara)</name>
    <name type="common">Halobacterium pharaonis</name>
    <dbReference type="NCBI Taxonomy" id="348780"/>
    <lineage>
        <taxon>Archaea</taxon>
        <taxon>Methanobacteriati</taxon>
        <taxon>Methanobacteriota</taxon>
        <taxon>Stenosarchaea group</taxon>
        <taxon>Halobacteria</taxon>
        <taxon>Halobacteriales</taxon>
        <taxon>Haloarculaceae</taxon>
        <taxon>Natronomonas</taxon>
    </lineage>
</organism>
<gene>
    <name evidence="1" type="primary">aroE</name>
    <name type="ordered locus">NP_0806A</name>
</gene>
<sequence>MDVYGLIGNPVEHSVSPPMHEAAYEALGLDARYVTFEPASEQLDTALEGASALGVRGLNVTIPFKEDVLDVVEPDPLAERIGAVNTIDFEGEPTGHNTDAAGVIRAFQHHDVERSGTAVVVGAGGAGRAAAFALADEGMEVHIANRTVSRATALATEVPDATGHGLDELAELVPDADVLVNATSVGMEADETPVPKRHLHEGLAVLDAVYAPLETRLLREADAAGATTIDGAWMLLFQGVEAFEIWTGKAAPVEPMNEALRSSL</sequence>
<comment type="function">
    <text evidence="1">Involved in the biosynthesis of the chorismate, which leads to the biosynthesis of aromatic amino acids. Catalyzes the reversible NADPH linked reduction of 3-dehydroshikimate (DHSA) to yield shikimate (SA).</text>
</comment>
<comment type="catalytic activity">
    <reaction evidence="1">
        <text>shikimate + NADP(+) = 3-dehydroshikimate + NADPH + H(+)</text>
        <dbReference type="Rhea" id="RHEA:17737"/>
        <dbReference type="ChEBI" id="CHEBI:15378"/>
        <dbReference type="ChEBI" id="CHEBI:16630"/>
        <dbReference type="ChEBI" id="CHEBI:36208"/>
        <dbReference type="ChEBI" id="CHEBI:57783"/>
        <dbReference type="ChEBI" id="CHEBI:58349"/>
        <dbReference type="EC" id="1.1.1.25"/>
    </reaction>
</comment>
<comment type="pathway">
    <text evidence="1">Metabolic intermediate biosynthesis; chorismate biosynthesis; chorismate from D-erythrose 4-phosphate and phosphoenolpyruvate: step 4/7.</text>
</comment>
<comment type="subunit">
    <text evidence="1">Homodimer.</text>
</comment>
<comment type="similarity">
    <text evidence="1">Belongs to the shikimate dehydrogenase family.</text>
</comment>
<name>AROE_NATPD</name>
<keyword id="KW-0028">Amino-acid biosynthesis</keyword>
<keyword id="KW-0057">Aromatic amino acid biosynthesis</keyword>
<keyword id="KW-0521">NADP</keyword>
<keyword id="KW-0560">Oxidoreductase</keyword>
<keyword id="KW-1185">Reference proteome</keyword>
<protein>
    <recommendedName>
        <fullName evidence="1">Shikimate dehydrogenase (NADP(+))</fullName>
        <shortName evidence="1">SDH</shortName>
        <ecNumber evidence="1">1.1.1.25</ecNumber>
    </recommendedName>
</protein>
<reference key="1">
    <citation type="journal article" date="2005" name="Genome Res.">
        <title>Living with two extremes: conclusions from the genome sequence of Natronomonas pharaonis.</title>
        <authorList>
            <person name="Falb M."/>
            <person name="Pfeiffer F."/>
            <person name="Palm P."/>
            <person name="Rodewald K."/>
            <person name="Hickmann V."/>
            <person name="Tittor J."/>
            <person name="Oesterhelt D."/>
        </authorList>
    </citation>
    <scope>NUCLEOTIDE SEQUENCE [LARGE SCALE GENOMIC DNA]</scope>
    <source>
        <strain>ATCC 35678 / DSM 2160 / CIP 103997 / JCM 8858 / NBRC 14720 / NCIMB 2260 / Gabara</strain>
    </source>
</reference>
<accession>Q3ITN9</accession>
<evidence type="ECO:0000255" key="1">
    <source>
        <dbReference type="HAMAP-Rule" id="MF_00222"/>
    </source>
</evidence>
<dbReference type="EC" id="1.1.1.25" evidence="1"/>
<dbReference type="EMBL" id="CR936257">
    <property type="protein sequence ID" value="CAI48494.1"/>
    <property type="molecule type" value="Genomic_DNA"/>
</dbReference>
<dbReference type="RefSeq" id="WP_011322130.1">
    <property type="nucleotide sequence ID" value="NC_007426.1"/>
</dbReference>
<dbReference type="SMR" id="Q3ITN9"/>
<dbReference type="STRING" id="348780.NP_0806A"/>
<dbReference type="EnsemblBacteria" id="CAI48494">
    <property type="protein sequence ID" value="CAI48494"/>
    <property type="gene ID" value="NP_0806A"/>
</dbReference>
<dbReference type="GeneID" id="3702529"/>
<dbReference type="KEGG" id="nph:NP_0806A"/>
<dbReference type="eggNOG" id="arCOG01033">
    <property type="taxonomic scope" value="Archaea"/>
</dbReference>
<dbReference type="HOGENOM" id="CLU_044063_1_1_2"/>
<dbReference type="OrthoDB" id="8744at2157"/>
<dbReference type="UniPathway" id="UPA00053">
    <property type="reaction ID" value="UER00087"/>
</dbReference>
<dbReference type="Proteomes" id="UP000002698">
    <property type="component" value="Chromosome"/>
</dbReference>
<dbReference type="GO" id="GO:0050661">
    <property type="term" value="F:NADP binding"/>
    <property type="evidence" value="ECO:0007669"/>
    <property type="project" value="InterPro"/>
</dbReference>
<dbReference type="GO" id="GO:0004764">
    <property type="term" value="F:shikimate 3-dehydrogenase (NADP+) activity"/>
    <property type="evidence" value="ECO:0007669"/>
    <property type="project" value="UniProtKB-UniRule"/>
</dbReference>
<dbReference type="GO" id="GO:0008652">
    <property type="term" value="P:amino acid biosynthetic process"/>
    <property type="evidence" value="ECO:0007669"/>
    <property type="project" value="UniProtKB-KW"/>
</dbReference>
<dbReference type="GO" id="GO:0009073">
    <property type="term" value="P:aromatic amino acid family biosynthetic process"/>
    <property type="evidence" value="ECO:0007669"/>
    <property type="project" value="UniProtKB-KW"/>
</dbReference>
<dbReference type="GO" id="GO:0009423">
    <property type="term" value="P:chorismate biosynthetic process"/>
    <property type="evidence" value="ECO:0007669"/>
    <property type="project" value="UniProtKB-UniRule"/>
</dbReference>
<dbReference type="GO" id="GO:0019632">
    <property type="term" value="P:shikimate metabolic process"/>
    <property type="evidence" value="ECO:0007669"/>
    <property type="project" value="InterPro"/>
</dbReference>
<dbReference type="CDD" id="cd01065">
    <property type="entry name" value="NAD_bind_Shikimate_DH"/>
    <property type="match status" value="1"/>
</dbReference>
<dbReference type="Gene3D" id="3.40.50.10860">
    <property type="entry name" value="Leucine Dehydrogenase, chain A, domain 1"/>
    <property type="match status" value="1"/>
</dbReference>
<dbReference type="Gene3D" id="3.40.50.720">
    <property type="entry name" value="NAD(P)-binding Rossmann-like Domain"/>
    <property type="match status" value="1"/>
</dbReference>
<dbReference type="HAMAP" id="MF_00222">
    <property type="entry name" value="Shikimate_DH_AroE"/>
    <property type="match status" value="1"/>
</dbReference>
<dbReference type="InterPro" id="IPR046346">
    <property type="entry name" value="Aminoacid_DH-like_N_sf"/>
</dbReference>
<dbReference type="InterPro" id="IPR036291">
    <property type="entry name" value="NAD(P)-bd_dom_sf"/>
</dbReference>
<dbReference type="InterPro" id="IPR041121">
    <property type="entry name" value="SDH_C"/>
</dbReference>
<dbReference type="InterPro" id="IPR011342">
    <property type="entry name" value="Shikimate_DH"/>
</dbReference>
<dbReference type="InterPro" id="IPR013708">
    <property type="entry name" value="Shikimate_DH-bd_N"/>
</dbReference>
<dbReference type="InterPro" id="IPR022893">
    <property type="entry name" value="Shikimate_DH_fam"/>
</dbReference>
<dbReference type="InterPro" id="IPR006151">
    <property type="entry name" value="Shikm_DH/Glu-tRNA_Rdtase"/>
</dbReference>
<dbReference type="NCBIfam" id="TIGR00507">
    <property type="entry name" value="aroE"/>
    <property type="match status" value="1"/>
</dbReference>
<dbReference type="NCBIfam" id="NF001319">
    <property type="entry name" value="PRK00258.3-3"/>
    <property type="match status" value="1"/>
</dbReference>
<dbReference type="PANTHER" id="PTHR21089:SF1">
    <property type="entry name" value="BIFUNCTIONAL 3-DEHYDROQUINATE DEHYDRATASE_SHIKIMATE DEHYDROGENASE, CHLOROPLASTIC"/>
    <property type="match status" value="1"/>
</dbReference>
<dbReference type="PANTHER" id="PTHR21089">
    <property type="entry name" value="SHIKIMATE DEHYDROGENASE"/>
    <property type="match status" value="1"/>
</dbReference>
<dbReference type="Pfam" id="PF18317">
    <property type="entry name" value="SDH_C"/>
    <property type="match status" value="1"/>
</dbReference>
<dbReference type="Pfam" id="PF01488">
    <property type="entry name" value="Shikimate_DH"/>
    <property type="match status" value="1"/>
</dbReference>
<dbReference type="Pfam" id="PF08501">
    <property type="entry name" value="Shikimate_dh_N"/>
    <property type="match status" value="1"/>
</dbReference>
<dbReference type="SUPFAM" id="SSF53223">
    <property type="entry name" value="Aminoacid dehydrogenase-like, N-terminal domain"/>
    <property type="match status" value="1"/>
</dbReference>
<dbReference type="SUPFAM" id="SSF51735">
    <property type="entry name" value="NAD(P)-binding Rossmann-fold domains"/>
    <property type="match status" value="1"/>
</dbReference>
<proteinExistence type="inferred from homology"/>